<keyword id="KW-0539">Nucleus</keyword>
<keyword id="KW-1185">Reference proteome</keyword>
<keyword id="KW-0804">Transcription</keyword>
<keyword id="KW-0805">Transcription regulation</keyword>
<sequence length="571" mass="64602">MDLHQLLKYRLTGANVVYEIPTENNLQNSPWQANPLKYEFSDSPYTPLSSQFECDNLSALTNTPDNQSSTETISAQPISPLEADSSYRQAGILLQENIQVGADPLYATSRHNMQHALREIETVLMAPDTDDATTSTKHEFEEIKPAQLVRQRSRTWSHESRQPLPGVGRSQFASGGYPTASYEFRPEKRQRELREDPQIIVKQLLTRCAEALSEDRTEEFHKLVQEARGVVSINGEPIQRLGAYLLEGLVARHGNSGTNIYRALKCREPESKELLSYMRILYNICPYFKFGYMAANGAIAEALRTENNIHIIDFQIAQGTQWITLIQALAARPGGPPRVRITGIDDPVSEYARGEGLDIVGKMLKSMSEEFKIPLEFTPLSVYATQVTKEMLEIRPGEALSVNFTLQLHHTPDESVDVNNPRDGLLRMVKGLSPKVTTLVEQESHTNTTPFLMRFGETMEYYSAMFESIDANLPRDNKERISVEQHCLAKDIVNIIACEGKDRVERHELLGKWKSRLTMAGFRPYPLSSYVNSVIRKLLACYSDKYTLDEKDGAMLLGWRSRKLISASAWH</sequence>
<gene>
    <name type="primary">CIGR1</name>
    <name type="ordered locus">Os07g0545800</name>
    <name type="ordered locus">LOC_Os07g36170</name>
    <name evidence="5" type="ORF">OsJ_24639</name>
    <name type="ORF">P0006G05.102</name>
</gene>
<feature type="chain" id="PRO_0000132229" description="Chitin-inducible gibberellin-responsive protein 1">
    <location>
        <begin position="1"/>
        <end position="571"/>
    </location>
</feature>
<feature type="domain" description="GRAS" evidence="1">
    <location>
        <begin position="192"/>
        <end position="571"/>
    </location>
</feature>
<feature type="region of interest" description="Disordered" evidence="2">
    <location>
        <begin position="61"/>
        <end position="80"/>
    </location>
</feature>
<feature type="region of interest" description="Disordered" evidence="2">
    <location>
        <begin position="151"/>
        <end position="180"/>
    </location>
</feature>
<feature type="region of interest" description="Leucine repeat I (LRI)" evidence="1">
    <location>
        <begin position="199"/>
        <end position="259"/>
    </location>
</feature>
<feature type="region of interest" description="VHIID" evidence="1">
    <location>
        <begin position="278"/>
        <end position="343"/>
    </location>
</feature>
<feature type="region of interest" description="Leucine repeat II (LRII)" evidence="1">
    <location>
        <begin position="359"/>
        <end position="391"/>
    </location>
</feature>
<feature type="region of interest" description="PFYRE" evidence="1">
    <location>
        <begin position="400"/>
        <end position="494"/>
    </location>
</feature>
<feature type="region of interest" description="SAW" evidence="1">
    <location>
        <begin position="497"/>
        <end position="571"/>
    </location>
</feature>
<feature type="short sequence motif" description="VHIID" evidence="1">
    <location>
        <begin position="309"/>
        <end position="313"/>
    </location>
</feature>
<feature type="compositionally biased region" description="Polar residues" evidence="2">
    <location>
        <begin position="61"/>
        <end position="77"/>
    </location>
</feature>
<organism>
    <name type="scientific">Oryza sativa subsp. japonica</name>
    <name type="common">Rice</name>
    <dbReference type="NCBI Taxonomy" id="39947"/>
    <lineage>
        <taxon>Eukaryota</taxon>
        <taxon>Viridiplantae</taxon>
        <taxon>Streptophyta</taxon>
        <taxon>Embryophyta</taxon>
        <taxon>Tracheophyta</taxon>
        <taxon>Spermatophyta</taxon>
        <taxon>Magnoliopsida</taxon>
        <taxon>Liliopsida</taxon>
        <taxon>Poales</taxon>
        <taxon>Poaceae</taxon>
        <taxon>BOP clade</taxon>
        <taxon>Oryzoideae</taxon>
        <taxon>Oryzeae</taxon>
        <taxon>Oryzinae</taxon>
        <taxon>Oryza</taxon>
        <taxon>Oryza sativa</taxon>
    </lineage>
</organism>
<reference key="1">
    <citation type="journal article" date="2003" name="Biochim. Biophys. Acta">
        <title>Identification and characterization of two new members of the GRAS gene family in rice responsive to N-acetylchitooligosaccharide elicitor.</title>
        <authorList>
            <person name="Day R.B."/>
            <person name="Shibuya N."/>
            <person name="Minami E."/>
        </authorList>
    </citation>
    <scope>NUCLEOTIDE SEQUENCE [MRNA]</scope>
    <scope>FUNCTION</scope>
    <scope>SUBCELLULAR LOCATION</scope>
    <scope>INDUCTION</scope>
    <source>
        <strain>cv. Nipponbare</strain>
    </source>
</reference>
<reference key="2">
    <citation type="journal article" date="2005" name="Nature">
        <title>The map-based sequence of the rice genome.</title>
        <authorList>
            <consortium name="International rice genome sequencing project (IRGSP)"/>
        </authorList>
    </citation>
    <scope>NUCLEOTIDE SEQUENCE [LARGE SCALE GENOMIC DNA]</scope>
    <source>
        <strain>cv. Nipponbare</strain>
    </source>
</reference>
<reference key="3">
    <citation type="journal article" date="2008" name="Nucleic Acids Res.">
        <title>The rice annotation project database (RAP-DB): 2008 update.</title>
        <authorList>
            <consortium name="The rice annotation project (RAP)"/>
        </authorList>
    </citation>
    <scope>GENOME REANNOTATION</scope>
    <source>
        <strain>cv. Nipponbare</strain>
    </source>
</reference>
<reference key="4">
    <citation type="journal article" date="2013" name="Rice">
        <title>Improvement of the Oryza sativa Nipponbare reference genome using next generation sequence and optical map data.</title>
        <authorList>
            <person name="Kawahara Y."/>
            <person name="de la Bastide M."/>
            <person name="Hamilton J.P."/>
            <person name="Kanamori H."/>
            <person name="McCombie W.R."/>
            <person name="Ouyang S."/>
            <person name="Schwartz D.C."/>
            <person name="Tanaka T."/>
            <person name="Wu J."/>
            <person name="Zhou S."/>
            <person name="Childs K.L."/>
            <person name="Davidson R.M."/>
            <person name="Lin H."/>
            <person name="Quesada-Ocampo L."/>
            <person name="Vaillancourt B."/>
            <person name="Sakai H."/>
            <person name="Lee S.S."/>
            <person name="Kim J."/>
            <person name="Numa H."/>
            <person name="Itoh T."/>
            <person name="Buell C.R."/>
            <person name="Matsumoto T."/>
        </authorList>
    </citation>
    <scope>GENOME REANNOTATION</scope>
    <source>
        <strain>cv. Nipponbare</strain>
    </source>
</reference>
<reference key="5">
    <citation type="journal article" date="2005" name="PLoS Biol.">
        <title>The genomes of Oryza sativa: a history of duplications.</title>
        <authorList>
            <person name="Yu J."/>
            <person name="Wang J."/>
            <person name="Lin W."/>
            <person name="Li S."/>
            <person name="Li H."/>
            <person name="Zhou J."/>
            <person name="Ni P."/>
            <person name="Dong W."/>
            <person name="Hu S."/>
            <person name="Zeng C."/>
            <person name="Zhang J."/>
            <person name="Zhang Y."/>
            <person name="Li R."/>
            <person name="Xu Z."/>
            <person name="Li S."/>
            <person name="Li X."/>
            <person name="Zheng H."/>
            <person name="Cong L."/>
            <person name="Lin L."/>
            <person name="Yin J."/>
            <person name="Geng J."/>
            <person name="Li G."/>
            <person name="Shi J."/>
            <person name="Liu J."/>
            <person name="Lv H."/>
            <person name="Li J."/>
            <person name="Wang J."/>
            <person name="Deng Y."/>
            <person name="Ran L."/>
            <person name="Shi X."/>
            <person name="Wang X."/>
            <person name="Wu Q."/>
            <person name="Li C."/>
            <person name="Ren X."/>
            <person name="Wang J."/>
            <person name="Wang X."/>
            <person name="Li D."/>
            <person name="Liu D."/>
            <person name="Zhang X."/>
            <person name="Ji Z."/>
            <person name="Zhao W."/>
            <person name="Sun Y."/>
            <person name="Zhang Z."/>
            <person name="Bao J."/>
            <person name="Han Y."/>
            <person name="Dong L."/>
            <person name="Ji J."/>
            <person name="Chen P."/>
            <person name="Wu S."/>
            <person name="Liu J."/>
            <person name="Xiao Y."/>
            <person name="Bu D."/>
            <person name="Tan J."/>
            <person name="Yang L."/>
            <person name="Ye C."/>
            <person name="Zhang J."/>
            <person name="Xu J."/>
            <person name="Zhou Y."/>
            <person name="Yu Y."/>
            <person name="Zhang B."/>
            <person name="Zhuang S."/>
            <person name="Wei H."/>
            <person name="Liu B."/>
            <person name="Lei M."/>
            <person name="Yu H."/>
            <person name="Li Y."/>
            <person name="Xu H."/>
            <person name="Wei S."/>
            <person name="He X."/>
            <person name="Fang L."/>
            <person name="Zhang Z."/>
            <person name="Zhang Y."/>
            <person name="Huang X."/>
            <person name="Su Z."/>
            <person name="Tong W."/>
            <person name="Li J."/>
            <person name="Tong Z."/>
            <person name="Li S."/>
            <person name="Ye J."/>
            <person name="Wang L."/>
            <person name="Fang L."/>
            <person name="Lei T."/>
            <person name="Chen C.-S."/>
            <person name="Chen H.-C."/>
            <person name="Xu Z."/>
            <person name="Li H."/>
            <person name="Huang H."/>
            <person name="Zhang F."/>
            <person name="Xu H."/>
            <person name="Li N."/>
            <person name="Zhao C."/>
            <person name="Li S."/>
            <person name="Dong L."/>
            <person name="Huang Y."/>
            <person name="Li L."/>
            <person name="Xi Y."/>
            <person name="Qi Q."/>
            <person name="Li W."/>
            <person name="Zhang B."/>
            <person name="Hu W."/>
            <person name="Zhang Y."/>
            <person name="Tian X."/>
            <person name="Jiao Y."/>
            <person name="Liang X."/>
            <person name="Jin J."/>
            <person name="Gao L."/>
            <person name="Zheng W."/>
            <person name="Hao B."/>
            <person name="Liu S.-M."/>
            <person name="Wang W."/>
            <person name="Yuan L."/>
            <person name="Cao M."/>
            <person name="McDermott J."/>
            <person name="Samudrala R."/>
            <person name="Wang J."/>
            <person name="Wong G.K.-S."/>
            <person name="Yang H."/>
        </authorList>
    </citation>
    <scope>NUCLEOTIDE SEQUENCE [LARGE SCALE GENOMIC DNA]</scope>
    <source>
        <strain>cv. Nipponbare</strain>
    </source>
</reference>
<protein>
    <recommendedName>
        <fullName>Chitin-inducible gibberellin-responsive protein 1</fullName>
    </recommendedName>
</protein>
<name>CIGR1_ORYSJ</name>
<comment type="function">
    <text evidence="3">May play a regulatory role in the early step of oligosaccharide elicitor response, downstream of the membrane-associated high-affinity chitin-binding protein.</text>
</comment>
<comment type="subcellular location">
    <subcellularLocation>
        <location evidence="3">Nucleus</location>
    </subcellularLocation>
</comment>
<comment type="induction">
    <text evidence="3">By oligosaccharide elicitor (N-Acetylchitooligosaccharide) extracted from the rice blast fungus (M.grisea) cell wall. Strongest induction by chitin oligomer with greater degree of polymerization (heptamer). By inoculation of M.grisea in rice cell suspension culture.</text>
</comment>
<comment type="miscellaneous">
    <text>Induction by oligosaccharide elicitor is independent of de novo protein synthesis.</text>
</comment>
<comment type="similarity">
    <text evidence="4">Belongs to the GRAS family.</text>
</comment>
<comment type="sequence caution" evidence="4">
    <conflict type="frameshift">
        <sequence resource="EMBL-CDS" id="AAL61820"/>
    </conflict>
</comment>
<accession>Q69VG1</accession>
<accession>Q0D5P2</accession>
<accession>Q8GVE2</accession>
<proteinExistence type="evidence at transcript level"/>
<evidence type="ECO:0000255" key="1">
    <source>
        <dbReference type="PROSITE-ProRule" id="PRU01191"/>
    </source>
</evidence>
<evidence type="ECO:0000256" key="2">
    <source>
        <dbReference type="SAM" id="MobiDB-lite"/>
    </source>
</evidence>
<evidence type="ECO:0000269" key="3">
    <source>
    </source>
</evidence>
<evidence type="ECO:0000305" key="4"/>
<evidence type="ECO:0000312" key="5">
    <source>
        <dbReference type="EMBL" id="EEE67359.1"/>
    </source>
</evidence>
<dbReference type="EMBL" id="AY062209">
    <property type="protein sequence ID" value="AAL61820.1"/>
    <property type="status" value="ALT_FRAME"/>
    <property type="molecule type" value="mRNA"/>
</dbReference>
<dbReference type="EMBL" id="AP004235">
    <property type="protein sequence ID" value="BAD30510.1"/>
    <property type="molecule type" value="Genomic_DNA"/>
</dbReference>
<dbReference type="EMBL" id="AP008213">
    <property type="protein sequence ID" value="BAF21831.1"/>
    <property type="molecule type" value="Genomic_DNA"/>
</dbReference>
<dbReference type="EMBL" id="AP014963">
    <property type="protein sequence ID" value="BAT02004.1"/>
    <property type="molecule type" value="Genomic_DNA"/>
</dbReference>
<dbReference type="EMBL" id="CM000144">
    <property type="protein sequence ID" value="EEE67359.1"/>
    <property type="molecule type" value="Genomic_DNA"/>
</dbReference>
<dbReference type="RefSeq" id="XP_015646796.1">
    <property type="nucleotide sequence ID" value="XM_015791310.1"/>
</dbReference>
<dbReference type="SMR" id="Q69VG1"/>
<dbReference type="FunCoup" id="Q69VG1">
    <property type="interactions" value="784"/>
</dbReference>
<dbReference type="STRING" id="39947.Q69VG1"/>
<dbReference type="PaxDb" id="39947-Q69VG1"/>
<dbReference type="EnsemblPlants" id="Os07t0545800-01">
    <property type="protein sequence ID" value="Os07t0545800-01"/>
    <property type="gene ID" value="Os07g0545800"/>
</dbReference>
<dbReference type="Gramene" id="Os07t0545800-01">
    <property type="protein sequence ID" value="Os07t0545800-01"/>
    <property type="gene ID" value="Os07g0545800"/>
</dbReference>
<dbReference type="KEGG" id="dosa:Os07g0545800"/>
<dbReference type="eggNOG" id="ENOG502QRZD">
    <property type="taxonomic scope" value="Eukaryota"/>
</dbReference>
<dbReference type="HOGENOM" id="CLU_011924_6_2_1"/>
<dbReference type="InParanoid" id="Q69VG1"/>
<dbReference type="OMA" id="FAPEITW"/>
<dbReference type="OrthoDB" id="1910309at2759"/>
<dbReference type="Proteomes" id="UP000000763">
    <property type="component" value="Chromosome 7"/>
</dbReference>
<dbReference type="Proteomes" id="UP000007752">
    <property type="component" value="Chromosome 7"/>
</dbReference>
<dbReference type="Proteomes" id="UP000059680">
    <property type="component" value="Chromosome 7"/>
</dbReference>
<dbReference type="GO" id="GO:0005634">
    <property type="term" value="C:nucleus"/>
    <property type="evidence" value="ECO:0000318"/>
    <property type="project" value="GO_Central"/>
</dbReference>
<dbReference type="GO" id="GO:0003700">
    <property type="term" value="F:DNA-binding transcription factor activity"/>
    <property type="evidence" value="ECO:0000318"/>
    <property type="project" value="GO_Central"/>
</dbReference>
<dbReference type="GO" id="GO:0043565">
    <property type="term" value="F:sequence-specific DNA binding"/>
    <property type="evidence" value="ECO:0000318"/>
    <property type="project" value="GO_Central"/>
</dbReference>
<dbReference type="GO" id="GO:0006355">
    <property type="term" value="P:regulation of DNA-templated transcription"/>
    <property type="evidence" value="ECO:0000318"/>
    <property type="project" value="GO_Central"/>
</dbReference>
<dbReference type="InterPro" id="IPR005202">
    <property type="entry name" value="TF_GRAS"/>
</dbReference>
<dbReference type="PANTHER" id="PTHR31636">
    <property type="entry name" value="OSJNBA0084A10.13 PROTEIN-RELATED"/>
    <property type="match status" value="1"/>
</dbReference>
<dbReference type="Pfam" id="PF03514">
    <property type="entry name" value="GRAS"/>
    <property type="match status" value="1"/>
</dbReference>
<dbReference type="PROSITE" id="PS50985">
    <property type="entry name" value="GRAS"/>
    <property type="match status" value="1"/>
</dbReference>